<protein>
    <recommendedName>
        <fullName>F-box/FBD/LRR-repeat protein At2g04230</fullName>
    </recommendedName>
</protein>
<gene>
    <name type="ordered locus">At2g04230</name>
    <name type="ORF">T23O15.15</name>
</gene>
<evidence type="ECO:0000255" key="1">
    <source>
        <dbReference type="PROSITE-ProRule" id="PRU00080"/>
    </source>
</evidence>
<evidence type="ECO:0000305" key="2"/>
<keyword id="KW-0433">Leucine-rich repeat</keyword>
<keyword id="KW-1185">Reference proteome</keyword>
<keyword id="KW-0677">Repeat</keyword>
<accession>Q6NKX3</accession>
<accession>Q9SI10</accession>
<name>FDL14_ARATH</name>
<reference key="1">
    <citation type="journal article" date="1999" name="Nature">
        <title>Sequence and analysis of chromosome 2 of the plant Arabidopsis thaliana.</title>
        <authorList>
            <person name="Lin X."/>
            <person name="Kaul S."/>
            <person name="Rounsley S.D."/>
            <person name="Shea T.P."/>
            <person name="Benito M.-I."/>
            <person name="Town C.D."/>
            <person name="Fujii C.Y."/>
            <person name="Mason T.M."/>
            <person name="Bowman C.L."/>
            <person name="Barnstead M.E."/>
            <person name="Feldblyum T.V."/>
            <person name="Buell C.R."/>
            <person name="Ketchum K.A."/>
            <person name="Lee J.J."/>
            <person name="Ronning C.M."/>
            <person name="Koo H.L."/>
            <person name="Moffat K.S."/>
            <person name="Cronin L.A."/>
            <person name="Shen M."/>
            <person name="Pai G."/>
            <person name="Van Aken S."/>
            <person name="Umayam L."/>
            <person name="Tallon L.J."/>
            <person name="Gill J.E."/>
            <person name="Adams M.D."/>
            <person name="Carrera A.J."/>
            <person name="Creasy T.H."/>
            <person name="Goodman H.M."/>
            <person name="Somerville C.R."/>
            <person name="Copenhaver G.P."/>
            <person name="Preuss D."/>
            <person name="Nierman W.C."/>
            <person name="White O."/>
            <person name="Eisen J.A."/>
            <person name="Salzberg S.L."/>
            <person name="Fraser C.M."/>
            <person name="Venter J.C."/>
        </authorList>
    </citation>
    <scope>NUCLEOTIDE SEQUENCE [LARGE SCALE GENOMIC DNA]</scope>
    <source>
        <strain>cv. Columbia</strain>
    </source>
</reference>
<reference key="2">
    <citation type="journal article" date="2017" name="Plant J.">
        <title>Araport11: a complete reannotation of the Arabidopsis thaliana reference genome.</title>
        <authorList>
            <person name="Cheng C.Y."/>
            <person name="Krishnakumar V."/>
            <person name="Chan A.P."/>
            <person name="Thibaud-Nissen F."/>
            <person name="Schobel S."/>
            <person name="Town C.D."/>
        </authorList>
    </citation>
    <scope>GENOME REANNOTATION</scope>
    <source>
        <strain>cv. Columbia</strain>
    </source>
</reference>
<reference key="3">
    <citation type="submission" date="2004-04" db="EMBL/GenBank/DDBJ databases">
        <title>Arabidopsis ORF clones.</title>
        <authorList>
            <person name="Shinn P."/>
            <person name="Chen H."/>
            <person name="Cheuk R.F."/>
            <person name="Kim C.J."/>
            <person name="Carninci P."/>
            <person name="Hayashizaki Y."/>
            <person name="Ishida J."/>
            <person name="Kamiya A."/>
            <person name="Kawai J."/>
            <person name="Narusaka M."/>
            <person name="Sakurai T."/>
            <person name="Satou M."/>
            <person name="Seki M."/>
            <person name="Shinozaki K."/>
            <person name="Ecker J.R."/>
        </authorList>
    </citation>
    <scope>NUCLEOTIDE SEQUENCE [LARGE SCALE MRNA]</scope>
    <source>
        <strain>cv. Columbia</strain>
    </source>
</reference>
<reference key="4">
    <citation type="submission" date="2004-09" db="EMBL/GenBank/DDBJ databases">
        <title>Large-scale analysis of RIKEN Arabidopsis full-length (RAFL) cDNAs.</title>
        <authorList>
            <person name="Totoki Y."/>
            <person name="Seki M."/>
            <person name="Ishida J."/>
            <person name="Nakajima M."/>
            <person name="Enju A."/>
            <person name="Kamiya A."/>
            <person name="Narusaka M."/>
            <person name="Shin-i T."/>
            <person name="Nakagawa M."/>
            <person name="Sakamoto N."/>
            <person name="Oishi K."/>
            <person name="Kohara Y."/>
            <person name="Kobayashi M."/>
            <person name="Toyoda A."/>
            <person name="Sakaki Y."/>
            <person name="Sakurai T."/>
            <person name="Iida K."/>
            <person name="Akiyama K."/>
            <person name="Satou M."/>
            <person name="Toyoda T."/>
            <person name="Konagaya A."/>
            <person name="Carninci P."/>
            <person name="Kawai J."/>
            <person name="Hayashizaki Y."/>
            <person name="Shinozaki K."/>
        </authorList>
    </citation>
    <scope>NUCLEOTIDE SEQUENCE [LARGE SCALE MRNA]</scope>
    <source>
        <strain>cv. Columbia</strain>
    </source>
</reference>
<feature type="chain" id="PRO_0000283107" description="F-box/FBD/LRR-repeat protein At2g04230">
    <location>
        <begin position="1"/>
        <end position="448"/>
    </location>
</feature>
<feature type="domain" description="F-box" evidence="1">
    <location>
        <begin position="12"/>
        <end position="64"/>
    </location>
</feature>
<feature type="repeat" description="LRR 1">
    <location>
        <begin position="72"/>
        <end position="98"/>
    </location>
</feature>
<feature type="repeat" description="LRR 2">
    <location>
        <begin position="149"/>
        <end position="176"/>
    </location>
</feature>
<feature type="repeat" description="LRR 3">
    <location>
        <begin position="177"/>
        <end position="202"/>
    </location>
</feature>
<feature type="repeat" description="LRR 4">
    <location>
        <begin position="204"/>
        <end position="225"/>
    </location>
</feature>
<feature type="repeat" description="LRR 5">
    <location>
        <begin position="226"/>
        <end position="251"/>
    </location>
</feature>
<feature type="repeat" description="LRR 6">
    <location>
        <begin position="271"/>
        <end position="296"/>
    </location>
</feature>
<feature type="repeat" description="LRR 7">
    <location>
        <begin position="319"/>
        <end position="345"/>
    </location>
</feature>
<feature type="domain" description="FBD">
    <location>
        <begin position="359"/>
        <end position="410"/>
    </location>
</feature>
<dbReference type="EMBL" id="AC007213">
    <property type="protein sequence ID" value="AAD27915.1"/>
    <property type="status" value="ALT_SEQ"/>
    <property type="molecule type" value="Genomic_DNA"/>
</dbReference>
<dbReference type="EMBL" id="CP002685">
    <property type="protein sequence ID" value="AEC05809.1"/>
    <property type="molecule type" value="Genomic_DNA"/>
</dbReference>
<dbReference type="EMBL" id="BT012570">
    <property type="protein sequence ID" value="AAS99714.1"/>
    <property type="molecule type" value="mRNA"/>
</dbReference>
<dbReference type="EMBL" id="AK176557">
    <property type="protein sequence ID" value="BAD44320.1"/>
    <property type="molecule type" value="mRNA"/>
</dbReference>
<dbReference type="PIR" id="D84455">
    <property type="entry name" value="D84455"/>
</dbReference>
<dbReference type="RefSeq" id="NP_178506.3">
    <property type="nucleotide sequence ID" value="NM_126458.5"/>
</dbReference>
<dbReference type="BioGRID" id="361">
    <property type="interactions" value="3"/>
</dbReference>
<dbReference type="FunCoup" id="Q6NKX3">
    <property type="interactions" value="62"/>
</dbReference>
<dbReference type="IntAct" id="Q6NKX3">
    <property type="interactions" value="1"/>
</dbReference>
<dbReference type="PaxDb" id="3702-AT2G04230.1"/>
<dbReference type="ProteomicsDB" id="230872"/>
<dbReference type="EnsemblPlants" id="AT2G04230.1">
    <property type="protein sequence ID" value="AT2G04230.1"/>
    <property type="gene ID" value="AT2G04230"/>
</dbReference>
<dbReference type="GeneID" id="814960"/>
<dbReference type="Gramene" id="AT2G04230.1">
    <property type="protein sequence ID" value="AT2G04230.1"/>
    <property type="gene ID" value="AT2G04230"/>
</dbReference>
<dbReference type="KEGG" id="ath:AT2G04230"/>
<dbReference type="Araport" id="AT2G04230"/>
<dbReference type="TAIR" id="AT2G04230"/>
<dbReference type="HOGENOM" id="CLU_010721_1_2_1"/>
<dbReference type="InParanoid" id="Q6NKX3"/>
<dbReference type="OMA" id="HLHYVCV"/>
<dbReference type="PhylomeDB" id="Q6NKX3"/>
<dbReference type="PRO" id="PR:Q6NKX3"/>
<dbReference type="Proteomes" id="UP000006548">
    <property type="component" value="Chromosome 2"/>
</dbReference>
<dbReference type="ExpressionAtlas" id="Q6NKX3">
    <property type="expression patterns" value="baseline and differential"/>
</dbReference>
<dbReference type="CDD" id="cd22160">
    <property type="entry name" value="F-box_AtFBL13-like"/>
    <property type="match status" value="1"/>
</dbReference>
<dbReference type="Gene3D" id="1.20.1280.50">
    <property type="match status" value="1"/>
</dbReference>
<dbReference type="Gene3D" id="3.80.10.10">
    <property type="entry name" value="Ribonuclease Inhibitor"/>
    <property type="match status" value="1"/>
</dbReference>
<dbReference type="InterPro" id="IPR036047">
    <property type="entry name" value="F-box-like_dom_sf"/>
</dbReference>
<dbReference type="InterPro" id="IPR053781">
    <property type="entry name" value="F-box_AtFBL13-like"/>
</dbReference>
<dbReference type="InterPro" id="IPR001810">
    <property type="entry name" value="F-box_dom"/>
</dbReference>
<dbReference type="InterPro" id="IPR006566">
    <property type="entry name" value="FBD"/>
</dbReference>
<dbReference type="InterPro" id="IPR050232">
    <property type="entry name" value="FBL13/AtMIF1-like"/>
</dbReference>
<dbReference type="InterPro" id="IPR032675">
    <property type="entry name" value="LRR_dom_sf"/>
</dbReference>
<dbReference type="InterPro" id="IPR055411">
    <property type="entry name" value="LRR_FXL15/At3g58940/PEG3-like"/>
</dbReference>
<dbReference type="PANTHER" id="PTHR31900:SF34">
    <property type="entry name" value="EMB|CAB62440.1-RELATED"/>
    <property type="match status" value="1"/>
</dbReference>
<dbReference type="PANTHER" id="PTHR31900">
    <property type="entry name" value="F-BOX/RNI SUPERFAMILY PROTEIN-RELATED"/>
    <property type="match status" value="1"/>
</dbReference>
<dbReference type="Pfam" id="PF00646">
    <property type="entry name" value="F-box"/>
    <property type="match status" value="1"/>
</dbReference>
<dbReference type="Pfam" id="PF08387">
    <property type="entry name" value="FBD"/>
    <property type="match status" value="1"/>
</dbReference>
<dbReference type="Pfam" id="PF24758">
    <property type="entry name" value="LRR_At5g56370"/>
    <property type="match status" value="1"/>
</dbReference>
<dbReference type="SMART" id="SM00579">
    <property type="entry name" value="FBD"/>
    <property type="match status" value="1"/>
</dbReference>
<dbReference type="SMART" id="SM00256">
    <property type="entry name" value="FBOX"/>
    <property type="match status" value="1"/>
</dbReference>
<dbReference type="SUPFAM" id="SSF81383">
    <property type="entry name" value="F-box domain"/>
    <property type="match status" value="1"/>
</dbReference>
<dbReference type="SUPFAM" id="SSF52058">
    <property type="entry name" value="L domain-like"/>
    <property type="match status" value="1"/>
</dbReference>
<dbReference type="PROSITE" id="PS50181">
    <property type="entry name" value="FBOX"/>
    <property type="match status" value="1"/>
</dbReference>
<organism>
    <name type="scientific">Arabidopsis thaliana</name>
    <name type="common">Mouse-ear cress</name>
    <dbReference type="NCBI Taxonomy" id="3702"/>
    <lineage>
        <taxon>Eukaryota</taxon>
        <taxon>Viridiplantae</taxon>
        <taxon>Streptophyta</taxon>
        <taxon>Embryophyta</taxon>
        <taxon>Tracheophyta</taxon>
        <taxon>Spermatophyta</taxon>
        <taxon>Magnoliopsida</taxon>
        <taxon>eudicotyledons</taxon>
        <taxon>Gunneridae</taxon>
        <taxon>Pentapetalae</taxon>
        <taxon>rosids</taxon>
        <taxon>malvids</taxon>
        <taxon>Brassicales</taxon>
        <taxon>Brassicaceae</taxon>
        <taxon>Camelineae</taxon>
        <taxon>Arabidopsis</taxon>
    </lineage>
</organism>
<sequence length="448" mass="51309">MEQKFKTDSMNEDRISDLPDALLLQILSSLPTENAIATSVLSKRWRSLWTMLPKLKFDSNFNPVFDDDNIDPTMFSENVYKTLSLHKAPVLESLHLSFEGRTDCLHVGIWIATAFARGVRKLVLDSFYQEDQTVTLPSVLFSYNDSLEILKLKCAIDLDFPSRVCLKSLRKLYLDQVHFKDEESVCNLLCGCPSLQDLVVHRYSNADVATFTIASPSLQRLTIEDLRQEGGYGNGSYVINAPGLKYLNINGVIDIESCLIDKALELEEAKISNVSGITNENILESLTSAKRLILHLSPLEVKVPTGKIFDQLGCLELLTHEREWWNLLSIMLDSSPKLQILKLTDVYLHDNKTNPDERKWNPPKCAPECLLFHLETFLWIGYEWQRGDEKEVATYILENARRLKKATFSTKRIGREKLEDFEKRREMLNELAIVLWDSNSCHLVFEST</sequence>
<proteinExistence type="evidence at transcript level"/>
<comment type="sequence caution" evidence="2">
    <conflict type="erroneous gene model prediction">
        <sequence resource="EMBL-CDS" id="AAD27915"/>
    </conflict>
</comment>